<keyword id="KW-0150">Chloroplast</keyword>
<keyword id="KW-0963">Cytoplasm</keyword>
<keyword id="KW-0223">Dioxygenase</keyword>
<keyword id="KW-0275">Fatty acid biosynthesis</keyword>
<keyword id="KW-0276">Fatty acid metabolism</keyword>
<keyword id="KW-0408">Iron</keyword>
<keyword id="KW-0444">Lipid biosynthesis</keyword>
<keyword id="KW-0443">Lipid metabolism</keyword>
<keyword id="KW-0479">Metal-binding</keyword>
<keyword id="KW-0560">Oxidoreductase</keyword>
<keyword id="KW-0925">Oxylipin biosynthesis</keyword>
<keyword id="KW-0934">Plastid</keyword>
<keyword id="KW-1185">Reference proteome</keyword>
<keyword id="KW-0809">Transit peptide</keyword>
<accession>P38418</accession>
<accession>Q0WLR8</accession>
<accession>Q56WG6</accession>
<accession>Q8GW45</accession>
<accession>Q8W4E4</accession>
<accession>Q9M1U5</accession>
<protein>
    <recommendedName>
        <fullName>Lipoxygenase 2, chloroplastic</fullName>
        <shortName>AtLOX2</shortName>
        <ecNumber evidence="17">1.13.11.12</ecNumber>
    </recommendedName>
</protein>
<gene>
    <name type="primary">LOX2</name>
    <name type="ordered locus">At3g45140</name>
    <name type="ORF">T14D3.80</name>
</gene>
<reference key="1">
    <citation type="journal article" date="1993" name="Plant Physiol.">
        <title>Characterization of an Arabidopsis lipoxygenase gene responsive to methyl jasmonate and wounding.</title>
        <authorList>
            <person name="Bell E."/>
            <person name="Mullet J.E."/>
        </authorList>
    </citation>
    <scope>NUCLEOTIDE SEQUENCE [MRNA]</scope>
</reference>
<reference key="2">
    <citation type="journal article" date="2000" name="Nature">
        <title>Sequence and analysis of chromosome 3 of the plant Arabidopsis thaliana.</title>
        <authorList>
            <person name="Salanoubat M."/>
            <person name="Lemcke K."/>
            <person name="Rieger M."/>
            <person name="Ansorge W."/>
            <person name="Unseld M."/>
            <person name="Fartmann B."/>
            <person name="Valle G."/>
            <person name="Bloecker H."/>
            <person name="Perez-Alonso M."/>
            <person name="Obermaier B."/>
            <person name="Delseny M."/>
            <person name="Boutry M."/>
            <person name="Grivell L.A."/>
            <person name="Mache R."/>
            <person name="Puigdomenech P."/>
            <person name="De Simone V."/>
            <person name="Choisne N."/>
            <person name="Artiguenave F."/>
            <person name="Robert C."/>
            <person name="Brottier P."/>
            <person name="Wincker P."/>
            <person name="Cattolico L."/>
            <person name="Weissenbach J."/>
            <person name="Saurin W."/>
            <person name="Quetier F."/>
            <person name="Schaefer M."/>
            <person name="Mueller-Auer S."/>
            <person name="Gabel C."/>
            <person name="Fuchs M."/>
            <person name="Benes V."/>
            <person name="Wurmbach E."/>
            <person name="Drzonek H."/>
            <person name="Erfle H."/>
            <person name="Jordan N."/>
            <person name="Bangert S."/>
            <person name="Wiedelmann R."/>
            <person name="Kranz H."/>
            <person name="Voss H."/>
            <person name="Holland R."/>
            <person name="Brandt P."/>
            <person name="Nyakatura G."/>
            <person name="Vezzi A."/>
            <person name="D'Angelo M."/>
            <person name="Pallavicini A."/>
            <person name="Toppo S."/>
            <person name="Simionati B."/>
            <person name="Conrad A."/>
            <person name="Hornischer K."/>
            <person name="Kauer G."/>
            <person name="Loehnert T.-H."/>
            <person name="Nordsiek G."/>
            <person name="Reichelt J."/>
            <person name="Scharfe M."/>
            <person name="Schoen O."/>
            <person name="Bargues M."/>
            <person name="Terol J."/>
            <person name="Climent J."/>
            <person name="Navarro P."/>
            <person name="Collado C."/>
            <person name="Perez-Perez A."/>
            <person name="Ottenwaelder B."/>
            <person name="Duchemin D."/>
            <person name="Cooke R."/>
            <person name="Laudie M."/>
            <person name="Berger-Llauro C."/>
            <person name="Purnelle B."/>
            <person name="Masuy D."/>
            <person name="de Haan M."/>
            <person name="Maarse A.C."/>
            <person name="Alcaraz J.-P."/>
            <person name="Cottet A."/>
            <person name="Casacuberta E."/>
            <person name="Monfort A."/>
            <person name="Argiriou A."/>
            <person name="Flores M."/>
            <person name="Liguori R."/>
            <person name="Vitale D."/>
            <person name="Mannhaupt G."/>
            <person name="Haase D."/>
            <person name="Schoof H."/>
            <person name="Rudd S."/>
            <person name="Zaccaria P."/>
            <person name="Mewes H.-W."/>
            <person name="Mayer K.F.X."/>
            <person name="Kaul S."/>
            <person name="Town C.D."/>
            <person name="Koo H.L."/>
            <person name="Tallon L.J."/>
            <person name="Jenkins J."/>
            <person name="Rooney T."/>
            <person name="Rizzo M."/>
            <person name="Walts A."/>
            <person name="Utterback T."/>
            <person name="Fujii C.Y."/>
            <person name="Shea T.P."/>
            <person name="Creasy T.H."/>
            <person name="Haas B."/>
            <person name="Maiti R."/>
            <person name="Wu D."/>
            <person name="Peterson J."/>
            <person name="Van Aken S."/>
            <person name="Pai G."/>
            <person name="Militscher J."/>
            <person name="Sellers P."/>
            <person name="Gill J.E."/>
            <person name="Feldblyum T.V."/>
            <person name="Preuss D."/>
            <person name="Lin X."/>
            <person name="Nierman W.C."/>
            <person name="Salzberg S.L."/>
            <person name="White O."/>
            <person name="Venter J.C."/>
            <person name="Fraser C.M."/>
            <person name="Kaneko T."/>
            <person name="Nakamura Y."/>
            <person name="Sato S."/>
            <person name="Kato T."/>
            <person name="Asamizu E."/>
            <person name="Sasamoto S."/>
            <person name="Kimura T."/>
            <person name="Idesawa K."/>
            <person name="Kawashima K."/>
            <person name="Kishida Y."/>
            <person name="Kiyokawa C."/>
            <person name="Kohara M."/>
            <person name="Matsumoto M."/>
            <person name="Matsuno A."/>
            <person name="Muraki A."/>
            <person name="Nakayama S."/>
            <person name="Nakazaki N."/>
            <person name="Shinpo S."/>
            <person name="Takeuchi C."/>
            <person name="Wada T."/>
            <person name="Watanabe A."/>
            <person name="Yamada M."/>
            <person name="Yasuda M."/>
            <person name="Tabata S."/>
        </authorList>
    </citation>
    <scope>NUCLEOTIDE SEQUENCE [LARGE SCALE GENOMIC DNA]</scope>
    <source>
        <strain>cv. Columbia</strain>
    </source>
</reference>
<reference key="3">
    <citation type="journal article" date="2017" name="Plant J.">
        <title>Araport11: a complete reannotation of the Arabidopsis thaliana reference genome.</title>
        <authorList>
            <person name="Cheng C.Y."/>
            <person name="Krishnakumar V."/>
            <person name="Chan A.P."/>
            <person name="Thibaud-Nissen F."/>
            <person name="Schobel S."/>
            <person name="Town C.D."/>
        </authorList>
    </citation>
    <scope>GENOME REANNOTATION</scope>
    <source>
        <strain>cv. Columbia</strain>
    </source>
</reference>
<reference key="4">
    <citation type="journal article" date="2003" name="Science">
        <title>Empirical analysis of transcriptional activity in the Arabidopsis genome.</title>
        <authorList>
            <person name="Yamada K."/>
            <person name="Lim J."/>
            <person name="Dale J.M."/>
            <person name="Chen H."/>
            <person name="Shinn P."/>
            <person name="Palm C.J."/>
            <person name="Southwick A.M."/>
            <person name="Wu H.C."/>
            <person name="Kim C.J."/>
            <person name="Nguyen M."/>
            <person name="Pham P.K."/>
            <person name="Cheuk R.F."/>
            <person name="Karlin-Newmann G."/>
            <person name="Liu S.X."/>
            <person name="Lam B."/>
            <person name="Sakano H."/>
            <person name="Wu T."/>
            <person name="Yu G."/>
            <person name="Miranda M."/>
            <person name="Quach H.L."/>
            <person name="Tripp M."/>
            <person name="Chang C.H."/>
            <person name="Lee J.M."/>
            <person name="Toriumi M.J."/>
            <person name="Chan M.M."/>
            <person name="Tang C.C."/>
            <person name="Onodera C.S."/>
            <person name="Deng J.M."/>
            <person name="Akiyama K."/>
            <person name="Ansari Y."/>
            <person name="Arakawa T."/>
            <person name="Banh J."/>
            <person name="Banno F."/>
            <person name="Bowser L."/>
            <person name="Brooks S.Y."/>
            <person name="Carninci P."/>
            <person name="Chao Q."/>
            <person name="Choy N."/>
            <person name="Enju A."/>
            <person name="Goldsmith A.D."/>
            <person name="Gurjal M."/>
            <person name="Hansen N.F."/>
            <person name="Hayashizaki Y."/>
            <person name="Johnson-Hopson C."/>
            <person name="Hsuan V.W."/>
            <person name="Iida K."/>
            <person name="Karnes M."/>
            <person name="Khan S."/>
            <person name="Koesema E."/>
            <person name="Ishida J."/>
            <person name="Jiang P.X."/>
            <person name="Jones T."/>
            <person name="Kawai J."/>
            <person name="Kamiya A."/>
            <person name="Meyers C."/>
            <person name="Nakajima M."/>
            <person name="Narusaka M."/>
            <person name="Seki M."/>
            <person name="Sakurai T."/>
            <person name="Satou M."/>
            <person name="Tamse R."/>
            <person name="Vaysberg M."/>
            <person name="Wallender E.K."/>
            <person name="Wong C."/>
            <person name="Yamamura Y."/>
            <person name="Yuan S."/>
            <person name="Shinozaki K."/>
            <person name="Davis R.W."/>
            <person name="Theologis A."/>
            <person name="Ecker J.R."/>
        </authorList>
    </citation>
    <scope>NUCLEOTIDE SEQUENCE [LARGE SCALE MRNA]</scope>
    <source>
        <strain>cv. Columbia</strain>
    </source>
</reference>
<reference key="5">
    <citation type="journal article" date="2002" name="Science">
        <title>Functional annotation of a full-length Arabidopsis cDNA collection.</title>
        <authorList>
            <person name="Seki M."/>
            <person name="Narusaka M."/>
            <person name="Kamiya A."/>
            <person name="Ishida J."/>
            <person name="Satou M."/>
            <person name="Sakurai T."/>
            <person name="Nakajima M."/>
            <person name="Enju A."/>
            <person name="Akiyama K."/>
            <person name="Oono Y."/>
            <person name="Muramatsu M."/>
            <person name="Hayashizaki Y."/>
            <person name="Kawai J."/>
            <person name="Carninci P."/>
            <person name="Itoh M."/>
            <person name="Ishii Y."/>
            <person name="Arakawa T."/>
            <person name="Shibata K."/>
            <person name="Shinagawa A."/>
            <person name="Shinozaki K."/>
        </authorList>
    </citation>
    <scope>NUCLEOTIDE SEQUENCE [LARGE SCALE MRNA] OF 1-125</scope>
    <source>
        <strain>cv. Columbia</strain>
    </source>
</reference>
<reference key="6">
    <citation type="submission" date="2006-07" db="EMBL/GenBank/DDBJ databases">
        <title>Large-scale analysis of RIKEN Arabidopsis full-length (RAFL) cDNAs.</title>
        <authorList>
            <person name="Totoki Y."/>
            <person name="Seki M."/>
            <person name="Ishida J."/>
            <person name="Nakajima M."/>
            <person name="Enju A."/>
            <person name="Kamiya A."/>
            <person name="Narusaka M."/>
            <person name="Shin-i T."/>
            <person name="Nakagawa M."/>
            <person name="Sakamoto N."/>
            <person name="Oishi K."/>
            <person name="Kohara Y."/>
            <person name="Kobayashi M."/>
            <person name="Toyoda A."/>
            <person name="Sakaki Y."/>
            <person name="Sakurai T."/>
            <person name="Iida K."/>
            <person name="Akiyama K."/>
            <person name="Satou M."/>
            <person name="Toyoda T."/>
            <person name="Konagaya A."/>
            <person name="Carninci P."/>
            <person name="Kawai J."/>
            <person name="Hayashizaki Y."/>
            <person name="Shinozaki K."/>
        </authorList>
    </citation>
    <scope>NUCLEOTIDE SEQUENCE [LARGE SCALE MRNA] OF 454-896</scope>
    <source>
        <strain>cv. Columbia</strain>
    </source>
</reference>
<reference key="7">
    <citation type="journal article" date="1995" name="Proc. Natl. Acad. Sci. U.S.A.">
        <title>A chloroplast lipoxygenase is required for wound-induced jasmonic acid accumulation in Arabidopsis.</title>
        <authorList>
            <person name="Bell E."/>
            <person name="Creelman R.A."/>
            <person name="Mullet J.E."/>
        </authorList>
    </citation>
    <scope>FUNCTION</scope>
    <scope>SUBCELLULAR LOCATION</scope>
</reference>
<reference key="8">
    <citation type="journal article" date="2000" name="Plant Cell">
        <title>Involvement of phospholipase D in wound-induced accumulation of jasmonic acid in arabidopsis.</title>
        <authorList>
            <person name="Wang C."/>
            <person name="Zien C.A."/>
            <person name="Afitlhile M."/>
            <person name="Welti R."/>
            <person name="Hildebrand D.F."/>
            <person name="Wang X."/>
        </authorList>
    </citation>
    <scope>INDUCTION BY WOUNDING</scope>
</reference>
<reference key="9">
    <citation type="journal article" date="2000" name="Plant Mol. Biol.">
        <title>Plant lipoxygenase 2 is a translation initiation factor-4E-binding protein.</title>
        <authorList>
            <person name="Freire M.A."/>
            <person name="Tourneur C."/>
            <person name="Granier F."/>
            <person name="Camonis J."/>
            <person name="El Amrani A."/>
            <person name="Browning K.S."/>
            <person name="Robaglia C."/>
        </authorList>
    </citation>
    <scope>INTERACTION WITH EIF4E2</scope>
    <scope>SUBCELLULAR LOCATION</scope>
</reference>
<reference key="10">
    <citation type="journal article" date="2001" name="Plant Physiol.">
        <title>Molecular responses to aphid feeding in Arabidopsis in relation to plant defense pathways.</title>
        <authorList>
            <person name="Moran P.J."/>
            <person name="Thompson G.A."/>
        </authorList>
    </citation>
    <scope>INDUCTION BY APHIDS AND WOUNDING</scope>
</reference>
<reference key="11">
    <citation type="journal article" date="2002" name="Plant J.">
        <title>Fusion genetic analysis of jasmonate-signalling mutants in Arabidopsis.</title>
        <authorList>
            <person name="Jensen A.B."/>
            <person name="Raventos D."/>
            <person name="Mundy J."/>
        </authorList>
    </citation>
    <scope>INDUCTION BY JASMONATE</scope>
</reference>
<reference key="12">
    <citation type="journal article" date="2002" name="Plant Physiol.">
        <title>Evidence supporting a role of jasmonic acid in Arabidopsis leaf senescence.</title>
        <authorList>
            <person name="He Y."/>
            <person name="Fukushige H."/>
            <person name="Hildebrand D.F."/>
            <person name="Gan S."/>
        </authorList>
    </citation>
    <scope>DEVELOPMENTAL STAGE</scope>
</reference>
<reference key="13">
    <citation type="journal article" date="2004" name="Planta">
        <title>Nitric oxide is induced by wounding and influences jasmonic acid signaling in Arabidopsis thaliana.</title>
        <authorList>
            <person name="Huang X."/>
            <person name="Stettmaier K."/>
            <person name="Michel C."/>
            <person name="Hutzler P."/>
            <person name="Mueller M.J."/>
            <person name="Durner J."/>
        </authorList>
    </citation>
    <scope>INDUCTION BY NITRIC OXIDE</scope>
</reference>
<reference key="14">
    <citation type="journal article" date="2005" name="Plant Cell Physiol.">
        <title>Volatile C6-aldehydes and allo-ocimene activate defense genes and induce resistance against Botrytis cinerea in Arabidopsis thaliana.</title>
        <authorList>
            <person name="Kishimoto K."/>
            <person name="Matsui K."/>
            <person name="Ozawa R."/>
            <person name="Takabayashi J."/>
        </authorList>
    </citation>
    <scope>INDUCTION BY LEAF VOLATILES</scope>
</reference>
<reference key="15">
    <citation type="journal article" date="2007" name="J. Exp. Bot.">
        <title>Transcriptional responses of Arabidopsis thaliana ecotypes with different glucosinolate profiles after attack by polyphagous Myzus persicae and oligophagous Brevicoryne brassicae.</title>
        <authorList>
            <person name="Kusnierczyk A."/>
            <person name="Winge P."/>
            <person name="Midelfart H."/>
            <person name="Armbruster W.S."/>
            <person name="Rossiter J.T."/>
            <person name="Bones A.M."/>
        </authorList>
    </citation>
    <scope>INDUCTION BY MYZUS PERSICAE AND BREVICORYNE BRASSICAE</scope>
</reference>
<reference key="16">
    <citation type="journal article" date="2007" name="Mol. Plant Microbe Interact.">
        <title>The role of pectate lyase and the jasmonic acid defense response in Pseudomonas viridiflava virulence.</title>
        <authorList>
            <person name="Jakob K."/>
            <person name="Kniskern J.M."/>
            <person name="Bergelson J."/>
        </authorList>
    </citation>
    <scope>INDUCTION BY BACTERIAL PATHOGENS</scope>
</reference>
<reference key="17">
    <citation type="journal article" date="2007" name="Plant Cell">
        <title>Oxylipins produced by the 9-lipoxygenase pathway in Arabidopsis regulate lateral root development and defense responses through a specific signaling cascade.</title>
        <authorList>
            <person name="Vellosillo T."/>
            <person name="Martinez M."/>
            <person name="Lopez M.A."/>
            <person name="Vicente J."/>
            <person name="Cascon T."/>
            <person name="Dolan L."/>
            <person name="Hamberg M."/>
            <person name="Castresana C."/>
        </authorList>
    </citation>
    <scope>TISSUE SPECIFICITY</scope>
</reference>
<reference key="18">
    <citation type="journal article" date="2007" name="Plant Cell Physiol.">
        <title>WRKY62 transcription factor acts downstream of cytosolic NPR1 and negatively regulates jasmonate-responsive gene expression.</title>
        <authorList>
            <person name="Mao P."/>
            <person name="Duan M."/>
            <person name="Wei C."/>
            <person name="Li Y."/>
        </authorList>
    </citation>
    <scope>REPRESSION BY WRKY62</scope>
</reference>
<reference key="19">
    <citation type="journal article" date="2008" name="J. Exp. Bot.">
        <title>Caterpillar saliva interferes with induced Arabidopsis thaliana defence responses via the systemic acquired resistance pathway.</title>
        <authorList>
            <person name="Weech M.-H."/>
            <person name="Chapleau M."/>
            <person name="Pan L."/>
            <person name="Ide C."/>
            <person name="Bede J.C."/>
        </authorList>
    </citation>
    <scope>INDUCTION BY CATERPILLAR</scope>
</reference>
<reference key="20">
    <citation type="journal article" date="2008" name="PLoS ONE">
        <title>Sorting signals, N-terminal modifications and abundance of the chloroplast proteome.</title>
        <authorList>
            <person name="Zybailov B."/>
            <person name="Rutschow H."/>
            <person name="Friso G."/>
            <person name="Rudella A."/>
            <person name="Emanuelsson O."/>
            <person name="Sun Q."/>
            <person name="van Wijk K.J."/>
        </authorList>
    </citation>
    <scope>IDENTIFICATION BY MASS SPECTROMETRY</scope>
    <scope>SUBCELLULAR LOCATION [LARGE SCALE ANALYSIS]</scope>
</reference>
<reference key="21">
    <citation type="journal article" date="2009" name="Lipids">
        <title>Diversity of the enzymatic activity in the lipoxygenase gene family of Arabidopsis thaliana.</title>
        <authorList>
            <person name="Bannenberg G."/>
            <person name="Martinez M."/>
            <person name="Hamberg M."/>
            <person name="Castresana C."/>
        </authorList>
    </citation>
    <scope>FUNCTION</scope>
    <scope>CATALYTIC ACTIVITY</scope>
</reference>
<feature type="transit peptide" description="Chloroplast" evidence="1">
    <location>
        <begin position="1"/>
        <end position="56"/>
    </location>
</feature>
<feature type="chain" id="PRO_0000018326" description="Lipoxygenase 2, chloroplastic">
    <location>
        <begin position="57"/>
        <end position="896"/>
    </location>
</feature>
<feature type="domain" description="PLAT" evidence="2">
    <location>
        <begin position="79"/>
        <end position="199"/>
    </location>
</feature>
<feature type="domain" description="Lipoxygenase" evidence="3">
    <location>
        <begin position="202"/>
        <end position="896"/>
    </location>
</feature>
<feature type="region of interest" description="EIF4E2 binding">
    <location>
        <begin position="175"/>
        <end position="232"/>
    </location>
</feature>
<feature type="binding site" evidence="3">
    <location>
        <position position="554"/>
    </location>
    <ligand>
        <name>Fe cation</name>
        <dbReference type="ChEBI" id="CHEBI:24875"/>
        <note>catalytic</note>
    </ligand>
</feature>
<feature type="binding site" evidence="3">
    <location>
        <position position="559"/>
    </location>
    <ligand>
        <name>Fe cation</name>
        <dbReference type="ChEBI" id="CHEBI:24875"/>
        <note>catalytic</note>
    </ligand>
</feature>
<feature type="binding site" evidence="3">
    <location>
        <position position="746"/>
    </location>
    <ligand>
        <name>Fe cation</name>
        <dbReference type="ChEBI" id="CHEBI:24875"/>
        <note>catalytic</note>
    </ligand>
</feature>
<feature type="binding site" evidence="3">
    <location>
        <position position="750"/>
    </location>
    <ligand>
        <name>Fe cation</name>
        <dbReference type="ChEBI" id="CHEBI:24875"/>
        <note>catalytic</note>
    </ligand>
</feature>
<feature type="binding site" evidence="3">
    <location>
        <position position="896"/>
    </location>
    <ligand>
        <name>Fe cation</name>
        <dbReference type="ChEBI" id="CHEBI:24875"/>
        <note>catalytic</note>
    </ligand>
</feature>
<feature type="sequence conflict" description="In Ref. 5; BAC43666." evidence="19" ref="5">
    <original>ITVEDYA</original>
    <variation>EYTFFFL</variation>
    <location>
        <begin position="119"/>
        <end position="125"/>
    </location>
</feature>
<feature type="sequence conflict" description="In Ref. 4; AAL32689." evidence="19" ref="4">
    <original>W</original>
    <variation>C</variation>
    <location>
        <position position="613"/>
    </location>
</feature>
<feature type="sequence conflict" description="In Ref. 6; BAF01939." evidence="19" ref="6">
    <original>L</original>
    <variation>V</variation>
    <location>
        <position position="646"/>
    </location>
</feature>
<feature type="sequence conflict" description="In Ref. 6; BAF01939." evidence="19" ref="6">
    <original>L</original>
    <variation>F</variation>
    <location>
        <position position="731"/>
    </location>
</feature>
<comment type="function">
    <text evidence="17 18">13S-lipoxygenase that can use linolenic acid as substrates. Plant lipoxygenases may be involved in a number of diverse aspects of plant physiology including growth and development, pest resistance, and senescence or responses to wounding. Catalyzes the hydroperoxidation of lipids containing a cis,cis-1,4-pentadiene structure. Required for the wound-induced synthesis of jasmonic acid (JA) in leaves.</text>
</comment>
<comment type="catalytic activity">
    <reaction evidence="17">
        <text>(9Z,12Z)-octadecadienoate + O2 = (13S)-hydroperoxy-(9Z,11E)-octadecadienoate</text>
        <dbReference type="Rhea" id="RHEA:22780"/>
        <dbReference type="ChEBI" id="CHEBI:15379"/>
        <dbReference type="ChEBI" id="CHEBI:30245"/>
        <dbReference type="ChEBI" id="CHEBI:57466"/>
        <dbReference type="EC" id="1.13.11.12"/>
    </reaction>
    <physiologicalReaction direction="left-to-right" evidence="17">
        <dbReference type="Rhea" id="RHEA:22781"/>
    </physiologicalReaction>
</comment>
<comment type="catalytic activity">
    <reaction evidence="17">
        <text>(9Z,12Z,15Z)-octadecatrienoate + O2 = (13S)-hydroperoxy-(9Z,11E,15Z)-octadecatrienoate</text>
        <dbReference type="Rhea" id="RHEA:34495"/>
        <dbReference type="ChEBI" id="CHEBI:15379"/>
        <dbReference type="ChEBI" id="CHEBI:32387"/>
        <dbReference type="ChEBI" id="CHEBI:58757"/>
        <dbReference type="EC" id="1.13.11.12"/>
    </reaction>
    <physiologicalReaction direction="left-to-right" evidence="17">
        <dbReference type="Rhea" id="RHEA:34496"/>
    </physiologicalReaction>
</comment>
<comment type="cofactor">
    <cofactor evidence="3">
        <name>Fe cation</name>
        <dbReference type="ChEBI" id="CHEBI:24875"/>
    </cofactor>
    <text evidence="3">Binds 1 Fe cation per subunit. Iron is tightly bound.</text>
</comment>
<comment type="pathway">
    <text evidence="3">Lipid metabolism; oxylipin biosynthesis.</text>
</comment>
<comment type="subunit">
    <text evidence="5">Interacts with EIF4E2.</text>
</comment>
<comment type="interaction">
    <interactant intactId="EBI-1770437">
        <id>P38418</id>
    </interactant>
    <interactant intactId="EBI-1770425">
        <id>O04663</id>
        <label>EIF(ISO)4E</label>
    </interactant>
    <organismsDiffer>false</organismsDiffer>
    <experiments>7</experiments>
</comment>
<comment type="subcellular location">
    <subcellularLocation>
        <location evidence="15">Plastid</location>
        <location evidence="15">Chloroplast</location>
    </subcellularLocation>
    <subcellularLocation>
        <location>Cytoplasm</location>
    </subcellularLocation>
    <text>The unprocessed form is cytoplasmic whereas the cleaved form is chloroplastic.</text>
</comment>
<comment type="tissue specificity">
    <text evidence="12">In leaves and inflorescences but not abundant in seeds, roots and stems.</text>
</comment>
<comment type="developmental stage">
    <text evidence="8">Expression is sharply reduced in leaves during leaf senescence.</text>
</comment>
<comment type="induction">
    <text evidence="4 6 7 9 10 11 13 14 16">By methyl jasmonate (MeJA) and wounding, probably through nitric oxide-mediated (NO) induction. Slightly locally induced upon herbivors infestation such as aphids (Myzus persicae and Brevicoryne brassicae), or caterpillar (Spodoptera exigua). Induced by leaf-volatiles generated by herbivors-mediated wounding such as (E)-2-hexenal, (Z)-3-hexenal, (Z)-3-hexenol or allo-ocimene (2,6-dimethyl-2,4,6-octatriene). Increased levels by bacterial pathogens (e.g. P.viridiflava and P.syringae pv. tomato). Repressed by WRKY62.</text>
</comment>
<comment type="similarity">
    <text evidence="19">Belongs to the lipoxygenase family.</text>
</comment>
<comment type="sequence caution" evidence="19">
    <conflict type="erroneous gene model prediction">
        <sequence resource="EMBL-CDS" id="CAB72152"/>
    </conflict>
</comment>
<name>LOX2_ARATH</name>
<evidence type="ECO:0000255" key="1"/>
<evidence type="ECO:0000255" key="2">
    <source>
        <dbReference type="PROSITE-ProRule" id="PRU00152"/>
    </source>
</evidence>
<evidence type="ECO:0000255" key="3">
    <source>
        <dbReference type="PROSITE-ProRule" id="PRU00726"/>
    </source>
</evidence>
<evidence type="ECO:0000269" key="4">
    <source>
    </source>
</evidence>
<evidence type="ECO:0000269" key="5">
    <source>
    </source>
</evidence>
<evidence type="ECO:0000269" key="6">
    <source>
    </source>
</evidence>
<evidence type="ECO:0000269" key="7">
    <source>
    </source>
</evidence>
<evidence type="ECO:0000269" key="8">
    <source>
    </source>
</evidence>
<evidence type="ECO:0000269" key="9">
    <source>
    </source>
</evidence>
<evidence type="ECO:0000269" key="10">
    <source>
    </source>
</evidence>
<evidence type="ECO:0000269" key="11">
    <source>
    </source>
</evidence>
<evidence type="ECO:0000269" key="12">
    <source>
    </source>
</evidence>
<evidence type="ECO:0000269" key="13">
    <source>
    </source>
</evidence>
<evidence type="ECO:0000269" key="14">
    <source>
    </source>
</evidence>
<evidence type="ECO:0000269" key="15">
    <source>
    </source>
</evidence>
<evidence type="ECO:0000269" key="16">
    <source>
    </source>
</evidence>
<evidence type="ECO:0000269" key="17">
    <source>
    </source>
</evidence>
<evidence type="ECO:0000269" key="18">
    <source>
    </source>
</evidence>
<evidence type="ECO:0000305" key="19"/>
<organism>
    <name type="scientific">Arabidopsis thaliana</name>
    <name type="common">Mouse-ear cress</name>
    <dbReference type="NCBI Taxonomy" id="3702"/>
    <lineage>
        <taxon>Eukaryota</taxon>
        <taxon>Viridiplantae</taxon>
        <taxon>Streptophyta</taxon>
        <taxon>Embryophyta</taxon>
        <taxon>Tracheophyta</taxon>
        <taxon>Spermatophyta</taxon>
        <taxon>Magnoliopsida</taxon>
        <taxon>eudicotyledons</taxon>
        <taxon>Gunneridae</taxon>
        <taxon>Pentapetalae</taxon>
        <taxon>rosids</taxon>
        <taxon>malvids</taxon>
        <taxon>Brassicales</taxon>
        <taxon>Brassicaceae</taxon>
        <taxon>Camelineae</taxon>
        <taxon>Arabidopsis</taxon>
    </lineage>
</organism>
<dbReference type="EC" id="1.13.11.12" evidence="17"/>
<dbReference type="EMBL" id="L23968">
    <property type="protein sequence ID" value="AAA32749.1"/>
    <property type="molecule type" value="mRNA"/>
</dbReference>
<dbReference type="EMBL" id="AL138649">
    <property type="protein sequence ID" value="CAB72152.1"/>
    <property type="status" value="ALT_SEQ"/>
    <property type="molecule type" value="Genomic_DNA"/>
</dbReference>
<dbReference type="EMBL" id="CP002686">
    <property type="protein sequence ID" value="AEE77997.1"/>
    <property type="molecule type" value="Genomic_DNA"/>
</dbReference>
<dbReference type="EMBL" id="AY062611">
    <property type="protein sequence ID" value="AAL32689.1"/>
    <property type="molecule type" value="mRNA"/>
</dbReference>
<dbReference type="EMBL" id="AK119093">
    <property type="protein sequence ID" value="BAC43666.1"/>
    <property type="molecule type" value="mRNA"/>
</dbReference>
<dbReference type="EMBL" id="AK222075">
    <property type="protein sequence ID" value="BAD94917.1"/>
    <property type="molecule type" value="mRNA"/>
</dbReference>
<dbReference type="EMBL" id="AK230124">
    <property type="protein sequence ID" value="BAF01939.1"/>
    <property type="molecule type" value="mRNA"/>
</dbReference>
<dbReference type="PIR" id="JQ2391">
    <property type="entry name" value="JQ2391"/>
</dbReference>
<dbReference type="PIR" id="T47454">
    <property type="entry name" value="T47454"/>
</dbReference>
<dbReference type="RefSeq" id="NP_566875.1">
    <property type="nucleotide sequence ID" value="NM_114383.3"/>
</dbReference>
<dbReference type="SMR" id="P38418"/>
<dbReference type="BioGRID" id="8970">
    <property type="interactions" value="5"/>
</dbReference>
<dbReference type="FunCoup" id="P38418">
    <property type="interactions" value="54"/>
</dbReference>
<dbReference type="IntAct" id="P38418">
    <property type="interactions" value="4"/>
</dbReference>
<dbReference type="STRING" id="3702.P38418"/>
<dbReference type="iPTMnet" id="P38418"/>
<dbReference type="PaxDb" id="3702-AT3G45140.1"/>
<dbReference type="ProteomicsDB" id="238417"/>
<dbReference type="EnsemblPlants" id="AT3G45140.1">
    <property type="protein sequence ID" value="AT3G45140.1"/>
    <property type="gene ID" value="AT3G45140"/>
</dbReference>
<dbReference type="GeneID" id="823650"/>
<dbReference type="Gramene" id="AT3G45140.1">
    <property type="protein sequence ID" value="AT3G45140.1"/>
    <property type="gene ID" value="AT3G45140"/>
</dbReference>
<dbReference type="KEGG" id="ath:AT3G45140"/>
<dbReference type="Araport" id="AT3G45140"/>
<dbReference type="TAIR" id="AT3G45140">
    <property type="gene designation" value="LOX2"/>
</dbReference>
<dbReference type="eggNOG" id="ENOG502QQSP">
    <property type="taxonomic scope" value="Eukaryota"/>
</dbReference>
<dbReference type="HOGENOM" id="CLU_004282_0_0_1"/>
<dbReference type="InParanoid" id="P38418"/>
<dbReference type="PhylomeDB" id="P38418"/>
<dbReference type="BioCyc" id="ARA:AT3G45140-MONOMER"/>
<dbReference type="BioCyc" id="MetaCyc:AT3G45140-MONOMER"/>
<dbReference type="BRENDA" id="1.13.11.12">
    <property type="organism ID" value="399"/>
</dbReference>
<dbReference type="UniPathway" id="UPA00382"/>
<dbReference type="CD-CODE" id="4299E36E">
    <property type="entry name" value="Nucleolus"/>
</dbReference>
<dbReference type="PRO" id="PR:P38418"/>
<dbReference type="Proteomes" id="UP000006548">
    <property type="component" value="Chromosome 3"/>
</dbReference>
<dbReference type="ExpressionAtlas" id="P38418">
    <property type="expression patterns" value="baseline and differential"/>
</dbReference>
<dbReference type="GO" id="GO:0009507">
    <property type="term" value="C:chloroplast"/>
    <property type="evidence" value="ECO:0000314"/>
    <property type="project" value="UniProtKB"/>
</dbReference>
<dbReference type="GO" id="GO:0009941">
    <property type="term" value="C:chloroplast envelope"/>
    <property type="evidence" value="ECO:0007005"/>
    <property type="project" value="TAIR"/>
</dbReference>
<dbReference type="GO" id="GO:0009570">
    <property type="term" value="C:chloroplast stroma"/>
    <property type="evidence" value="ECO:0007005"/>
    <property type="project" value="TAIR"/>
</dbReference>
<dbReference type="GO" id="GO:0009535">
    <property type="term" value="C:chloroplast thylakoid membrane"/>
    <property type="evidence" value="ECO:0007005"/>
    <property type="project" value="TAIR"/>
</dbReference>
<dbReference type="GO" id="GO:0005737">
    <property type="term" value="C:cytoplasm"/>
    <property type="evidence" value="ECO:0000314"/>
    <property type="project" value="UniProtKB"/>
</dbReference>
<dbReference type="GO" id="GO:0005829">
    <property type="term" value="C:cytosol"/>
    <property type="evidence" value="ECO:0007005"/>
    <property type="project" value="TAIR"/>
</dbReference>
<dbReference type="GO" id="GO:0016165">
    <property type="term" value="F:linoleate 13S-lipoxygenase activity"/>
    <property type="evidence" value="ECO:0000314"/>
    <property type="project" value="UniProtKB"/>
</dbReference>
<dbReference type="GO" id="GO:0046872">
    <property type="term" value="F:metal ion binding"/>
    <property type="evidence" value="ECO:0007669"/>
    <property type="project" value="UniProtKB-KW"/>
</dbReference>
<dbReference type="GO" id="GO:0003729">
    <property type="term" value="F:mRNA binding"/>
    <property type="evidence" value="ECO:0000314"/>
    <property type="project" value="TAIR"/>
</dbReference>
<dbReference type="GO" id="GO:1901149">
    <property type="term" value="F:salicylic acid binding"/>
    <property type="evidence" value="ECO:0007005"/>
    <property type="project" value="TAIR"/>
</dbReference>
<dbReference type="GO" id="GO:0010597">
    <property type="term" value="P:green leaf volatile biosynthetic process"/>
    <property type="evidence" value="ECO:0000315"/>
    <property type="project" value="TAIR"/>
</dbReference>
<dbReference type="GO" id="GO:0009695">
    <property type="term" value="P:jasmonic acid biosynthetic process"/>
    <property type="evidence" value="ECO:0000315"/>
    <property type="project" value="TAIR"/>
</dbReference>
<dbReference type="GO" id="GO:0034440">
    <property type="term" value="P:lipid oxidation"/>
    <property type="evidence" value="ECO:0000314"/>
    <property type="project" value="TAIR"/>
</dbReference>
<dbReference type="GO" id="GO:0031408">
    <property type="term" value="P:oxylipin biosynthetic process"/>
    <property type="evidence" value="ECO:0007669"/>
    <property type="project" value="UniProtKB-UniPathway"/>
</dbReference>
<dbReference type="GO" id="GO:0009617">
    <property type="term" value="P:response to bacterium"/>
    <property type="evidence" value="ECO:0000270"/>
    <property type="project" value="UniProtKB"/>
</dbReference>
<dbReference type="GO" id="GO:0009620">
    <property type="term" value="P:response to fungus"/>
    <property type="evidence" value="ECO:0000270"/>
    <property type="project" value="TAIR"/>
</dbReference>
<dbReference type="GO" id="GO:0080027">
    <property type="term" value="P:response to herbivore"/>
    <property type="evidence" value="ECO:0000270"/>
    <property type="project" value="UniProtKB"/>
</dbReference>
<dbReference type="GO" id="GO:0009753">
    <property type="term" value="P:response to jasmonic acid"/>
    <property type="evidence" value="ECO:0000270"/>
    <property type="project" value="TAIR"/>
</dbReference>
<dbReference type="GO" id="GO:0009611">
    <property type="term" value="P:response to wounding"/>
    <property type="evidence" value="ECO:0000270"/>
    <property type="project" value="UniProtKB"/>
</dbReference>
<dbReference type="CDD" id="cd01751">
    <property type="entry name" value="PLAT_LH2"/>
    <property type="match status" value="1"/>
</dbReference>
<dbReference type="FunFam" id="1.20.245.10:FF:000002">
    <property type="entry name" value="Lipoxygenase"/>
    <property type="match status" value="1"/>
</dbReference>
<dbReference type="FunFam" id="3.10.450.60:FF:000005">
    <property type="entry name" value="Lipoxygenase"/>
    <property type="match status" value="1"/>
</dbReference>
<dbReference type="Gene3D" id="3.10.450.60">
    <property type="match status" value="1"/>
</dbReference>
<dbReference type="Gene3D" id="4.10.375.10">
    <property type="entry name" value="Lipoxygenase-1, Domain 2"/>
    <property type="match status" value="1"/>
</dbReference>
<dbReference type="Gene3D" id="4.10.372.10">
    <property type="entry name" value="Lipoxygenase-1, Domain 3"/>
    <property type="match status" value="1"/>
</dbReference>
<dbReference type="Gene3D" id="1.20.245.10">
    <property type="entry name" value="Lipoxygenase-1, Domain 5"/>
    <property type="match status" value="1"/>
</dbReference>
<dbReference type="Gene3D" id="2.60.60.20">
    <property type="entry name" value="PLAT/LH2 domain"/>
    <property type="match status" value="1"/>
</dbReference>
<dbReference type="InterPro" id="IPR000907">
    <property type="entry name" value="LipOase"/>
</dbReference>
<dbReference type="InterPro" id="IPR013819">
    <property type="entry name" value="LipOase_C"/>
</dbReference>
<dbReference type="InterPro" id="IPR036226">
    <property type="entry name" value="LipOase_C_sf"/>
</dbReference>
<dbReference type="InterPro" id="IPR020834">
    <property type="entry name" value="LipOase_CS"/>
</dbReference>
<dbReference type="InterPro" id="IPR020833">
    <property type="entry name" value="LipOase_Fe_BS"/>
</dbReference>
<dbReference type="InterPro" id="IPR001246">
    <property type="entry name" value="LipOase_plant"/>
</dbReference>
<dbReference type="InterPro" id="IPR042057">
    <property type="entry name" value="Lipoxy_PLAT/LH2"/>
</dbReference>
<dbReference type="InterPro" id="IPR027433">
    <property type="entry name" value="Lipoxygenase_dom_3"/>
</dbReference>
<dbReference type="InterPro" id="IPR001024">
    <property type="entry name" value="PLAT/LH2_dom"/>
</dbReference>
<dbReference type="InterPro" id="IPR036392">
    <property type="entry name" value="PLAT/LH2_dom_sf"/>
</dbReference>
<dbReference type="PANTHER" id="PTHR11771">
    <property type="entry name" value="LIPOXYGENASE"/>
    <property type="match status" value="1"/>
</dbReference>
<dbReference type="Pfam" id="PF00305">
    <property type="entry name" value="Lipoxygenase"/>
    <property type="match status" value="1"/>
</dbReference>
<dbReference type="Pfam" id="PF01477">
    <property type="entry name" value="PLAT"/>
    <property type="match status" value="1"/>
</dbReference>
<dbReference type="PRINTS" id="PR00087">
    <property type="entry name" value="LIPOXYGENASE"/>
</dbReference>
<dbReference type="PRINTS" id="PR00468">
    <property type="entry name" value="PLTLPOXGNASE"/>
</dbReference>
<dbReference type="SMART" id="SM00308">
    <property type="entry name" value="LH2"/>
    <property type="match status" value="1"/>
</dbReference>
<dbReference type="SUPFAM" id="SSF49723">
    <property type="entry name" value="Lipase/lipooxygenase domain (PLAT/LH2 domain)"/>
    <property type="match status" value="1"/>
</dbReference>
<dbReference type="SUPFAM" id="SSF48484">
    <property type="entry name" value="Lipoxigenase"/>
    <property type="match status" value="1"/>
</dbReference>
<dbReference type="PROSITE" id="PS00711">
    <property type="entry name" value="LIPOXYGENASE_1"/>
    <property type="match status" value="1"/>
</dbReference>
<dbReference type="PROSITE" id="PS00081">
    <property type="entry name" value="LIPOXYGENASE_2"/>
    <property type="match status" value="1"/>
</dbReference>
<dbReference type="PROSITE" id="PS51393">
    <property type="entry name" value="LIPOXYGENASE_3"/>
    <property type="match status" value="1"/>
</dbReference>
<dbReference type="PROSITE" id="PS50095">
    <property type="entry name" value="PLAT"/>
    <property type="match status" value="1"/>
</dbReference>
<sequence>MYCRESLSSLQTLNVAKSLSSLFPKQSALINPISAGRRNNLPRPNLRRRCKVTASRANIEQEGNTVKEPIQNIKVKGYITAQEEFLEGITWSRGLDDIADIRGRSLLVELISAKTDQRITVEDYAQRVWAEAPDEKYECEFEMPEDFGPVGAIKIQNQYHRQLFLKGVELKLPGGSITFTCESWVAPKSVDPTKRIFFSDKSYLPSQTPEPLKKYRKEELETLQGKNREEVGEFTKFERIYDYDVYNDVGDPDNDPELARPVIGGLTHPYPRRCKTGRKPCETDPSSEQRYGGEFYVPRDEEFSTAKGTSFTGKAVLAALPSIFPQIESVLLSPQEPFPHFKAIQNLFEEGIQLPKDAGLLPLLPRIIKALGEAQDDILQFDAPVLINRDRFSWLRDDEFARQTLAGLNPYSIQLVEEWPLISKLDPAVYGDPTSLITWEIVEREVKGNMTVDEALKNKRLFVLDYHDLLLPYVNKVRELNNTTLYASRTLFFLSDDSTLRPVAIELTCPPNINKPQWKQVFTPGYDATSCWLWNLAKTHAISHDAGYHQLISHWLRTHACTEPYIIAANRQLSAMHPIYRLLHPHFRYTMEINARARQSLVNGGGIIETCFWPGKYALELSSAVYGKLWRFDQEGLPADLIKRGLAEEDKTAEHGVRLTIPDYPFANDGLILWDAIKEWVTDYVKHYYPDEELITSDEELQGWWSEVRNIGHGDKKDEPWWPVLKTQDDLIGVVTTIAWVTSGHHAAVNFGQYGYGGYFPNRPTTTRIRMPTEDPTDEALKEFYESPEKVLLKTYPSQKQATLVMVTLDLLSTHSPDEEYIGEQQEASWANEPVINAAFERFKGKLQYLEGVIDERNVNITLKNRAGAGVVKYELLKPTSEHGVTGMGVPYSISI</sequence>
<proteinExistence type="evidence at protein level"/>